<accession>P30248</accession>
<dbReference type="EMBL" id="X59820">
    <property type="protein sequence ID" value="CAA42492.1"/>
    <property type="molecule type" value="Genomic_RNA"/>
</dbReference>
<dbReference type="PIR" id="F36816">
    <property type="entry name" value="WMIH26"/>
</dbReference>
<dbReference type="GO" id="GO:0044178">
    <property type="term" value="C:host cell Golgi membrane"/>
    <property type="evidence" value="ECO:0007669"/>
    <property type="project" value="UniProtKB-SubCell"/>
</dbReference>
<dbReference type="GO" id="GO:0016020">
    <property type="term" value="C:membrane"/>
    <property type="evidence" value="ECO:0007669"/>
    <property type="project" value="UniProtKB-UniRule"/>
</dbReference>
<dbReference type="GO" id="GO:0140975">
    <property type="term" value="P:disruption of cellular anatomical structure in another organism"/>
    <property type="evidence" value="ECO:0007669"/>
    <property type="project" value="UniProtKB-UniRule"/>
</dbReference>
<dbReference type="GO" id="GO:0046760">
    <property type="term" value="P:viral budding from Golgi membrane"/>
    <property type="evidence" value="ECO:0007669"/>
    <property type="project" value="UniProtKB-UniRule"/>
</dbReference>
<dbReference type="HAMAP" id="MF_04206">
    <property type="entry name" value="GAMMA_CORONA_E"/>
    <property type="match status" value="1"/>
</dbReference>
<dbReference type="InterPro" id="IPR003873">
    <property type="entry name" value="E_protein_CoV"/>
</dbReference>
<dbReference type="InterPro" id="IPR005296">
    <property type="entry name" value="IBV_3C"/>
</dbReference>
<dbReference type="Pfam" id="PF03620">
    <property type="entry name" value="IBV_3C"/>
    <property type="match status" value="1"/>
</dbReference>
<dbReference type="PROSITE" id="PS51926">
    <property type="entry name" value="COV_E"/>
    <property type="match status" value="1"/>
</dbReference>
<keyword id="KW-0053">Apoptosis</keyword>
<keyword id="KW-1040">Host Golgi apparatus</keyword>
<keyword id="KW-1043">Host membrane</keyword>
<keyword id="KW-0472">Membrane</keyword>
<keyword id="KW-0812">Transmembrane</keyword>
<keyword id="KW-1133">Transmembrane helix</keyword>
<sequence length="107" mass="11994">MMNLVNKSLEENGSFLTAVYIFCAFVALYLLGRALHAFVQAADACCLFWYTWVVVPGAKGTAFVYKHTYGKKLNNPELESVIVNEFPKNGWNNKSPANFQNDGKLHS</sequence>
<proteinExistence type="inferred from homology"/>
<name>VEMP_IBVU5</name>
<organismHost>
    <name type="scientific">Gallus gallus</name>
    <name type="common">Chicken</name>
    <dbReference type="NCBI Taxonomy" id="9031"/>
</organismHost>
<reference key="1">
    <citation type="journal article" date="1991" name="Virology">
        <title>A polycistronic mRNA specified by the coronavirus infectious bronchitis virus.</title>
        <authorList>
            <person name="Liu D.X."/>
            <person name="Cavanagh D."/>
            <person name="Green P."/>
            <person name="Inglis S.C."/>
        </authorList>
    </citation>
    <scope>NUCLEOTIDE SEQUENCE [GENOMIC RNA]</scope>
</reference>
<evidence type="ECO:0000255" key="1">
    <source>
        <dbReference type="HAMAP-Rule" id="MF_04206"/>
    </source>
</evidence>
<organism>
    <name type="scientific">Avian infectious bronchitis virus (strain UK/183/66)</name>
    <name type="common">IBV</name>
    <dbReference type="NCBI Taxonomy" id="31629"/>
    <lineage>
        <taxon>Viruses</taxon>
        <taxon>Riboviria</taxon>
        <taxon>Orthornavirae</taxon>
        <taxon>Pisuviricota</taxon>
        <taxon>Pisoniviricetes</taxon>
        <taxon>Nidovirales</taxon>
        <taxon>Cornidovirineae</taxon>
        <taxon>Coronaviridae</taxon>
        <taxon>Orthocoronavirinae</taxon>
        <taxon>Gammacoronavirus</taxon>
        <taxon>Igacovirus</taxon>
        <taxon>Avian coronavirus</taxon>
    </lineage>
</organism>
<protein>
    <recommendedName>
        <fullName evidence="1">Envelope small membrane protein</fullName>
        <shortName evidence="1">E protein</shortName>
        <shortName evidence="1">sM protein</shortName>
    </recommendedName>
</protein>
<feature type="chain" id="PRO_0000106083" description="Envelope small membrane protein">
    <location>
        <begin position="1"/>
        <end position="107"/>
    </location>
</feature>
<feature type="topological domain" description="Virion surface" evidence="1">
    <location>
        <begin position="1"/>
        <end position="11"/>
    </location>
</feature>
<feature type="transmembrane region" description="Helical" evidence="1">
    <location>
        <begin position="12"/>
        <end position="32"/>
    </location>
</feature>
<feature type="topological domain" description="Intravirion" evidence="1">
    <location>
        <begin position="33"/>
        <end position="107"/>
    </location>
</feature>
<gene>
    <name evidence="1" type="primary">E</name>
    <name type="synonym">sM</name>
    <name type="ORF">3c</name>
</gene>
<comment type="function">
    <text evidence="1">Plays a central role in virus morphogenesis and assembly. Acts as a viroporin and self-assembles in host membranes forming pentameric protein-lipid pores that allow ion transport. Also plays a role in the induction of apoptosis.</text>
</comment>
<comment type="subunit">
    <text evidence="1">Homooligomer. Interacts with the M membrane protein in the budding compartment of the host cell, which is located between endoplasmic reticulum and the Golgi complex. The cytoplasmic tails of both proteins are important for this function. Interacts with Nucleoprotein.</text>
</comment>
<comment type="subcellular location">
    <subcellularLocation>
        <location evidence="1">Host Golgi apparatus membrane</location>
        <topology evidence="1">Single-pass type III membrane protein</topology>
    </subcellularLocation>
    <text evidence="1">The cytoplasmic tail functions as a Golgi complex-targeting signal.</text>
</comment>
<comment type="similarity">
    <text evidence="1">Belongs to the gammacoronaviruses E protein family.</text>
</comment>